<comment type="function">
    <text>Gap class segmentation protein that controls development of head structures.</text>
</comment>
<comment type="subcellular location">
    <subcellularLocation>
        <location evidence="2">Nucleus</location>
    </subcellularLocation>
</comment>
<comment type="similarity">
    <text evidence="2">Belongs to the hunchback C2H2-type zinc-finger protein family.</text>
</comment>
<reference key="1">
    <citation type="journal article" date="1992" name="Proc. Natl. Acad. Sci. U.S.A.">
        <title>Evolutionary conservation pattern of zinc-finger domains of Drosophila segmentation genes.</title>
        <authorList>
            <person name="Sommer R.J."/>
            <person name="Retzlaff M."/>
            <person name="Goerlich K."/>
            <person name="Sander K."/>
            <person name="Tautz D."/>
        </authorList>
    </citation>
    <scope>NUCLEOTIDE SEQUENCE [GENOMIC DNA]</scope>
</reference>
<accession>Q01790</accession>
<sequence>HILKHNGSKPIRCPECNYTCVNRSMLTSHMKSHSNTYPYRCLDCNYATKY</sequence>
<evidence type="ECO:0000255" key="1">
    <source>
        <dbReference type="PROSITE-ProRule" id="PRU00042"/>
    </source>
</evidence>
<evidence type="ECO:0000305" key="2"/>
<organism>
    <name type="scientific">Bradysia coprophila</name>
    <name type="common">Dark-winged fungus gnat</name>
    <name type="synonym">Sciara coprophila</name>
    <dbReference type="NCBI Taxonomy" id="38358"/>
    <lineage>
        <taxon>Eukaryota</taxon>
        <taxon>Metazoa</taxon>
        <taxon>Ecdysozoa</taxon>
        <taxon>Arthropoda</taxon>
        <taxon>Hexapoda</taxon>
        <taxon>Insecta</taxon>
        <taxon>Pterygota</taxon>
        <taxon>Neoptera</taxon>
        <taxon>Endopterygota</taxon>
        <taxon>Diptera</taxon>
        <taxon>Nematocera</taxon>
        <taxon>Sciaroidea</taxon>
        <taxon>Sciaridae</taxon>
        <taxon>Bradysia</taxon>
    </lineage>
</organism>
<proteinExistence type="inferred from homology"/>
<gene>
    <name type="primary">hb</name>
</gene>
<keyword id="KW-0217">Developmental protein</keyword>
<keyword id="KW-0238">DNA-binding</keyword>
<keyword id="KW-0302">Gap protein</keyword>
<keyword id="KW-0479">Metal-binding</keyword>
<keyword id="KW-0539">Nucleus</keyword>
<keyword id="KW-0677">Repeat</keyword>
<keyword id="KW-0862">Zinc</keyword>
<keyword id="KW-0863">Zinc-finger</keyword>
<protein>
    <recommendedName>
        <fullName>Protein hunchback</fullName>
    </recommendedName>
</protein>
<name>HUNB_BRACO</name>
<dbReference type="EMBL" id="L01612">
    <property type="protein sequence ID" value="AAA29815.1"/>
    <property type="molecule type" value="Genomic_DNA"/>
</dbReference>
<dbReference type="SMR" id="Q01790"/>
<dbReference type="GO" id="GO:0005634">
    <property type="term" value="C:nucleus"/>
    <property type="evidence" value="ECO:0007669"/>
    <property type="project" value="UniProtKB-SubCell"/>
</dbReference>
<dbReference type="GO" id="GO:0003677">
    <property type="term" value="F:DNA binding"/>
    <property type="evidence" value="ECO:0007669"/>
    <property type="project" value="UniProtKB-KW"/>
</dbReference>
<dbReference type="GO" id="GO:0008270">
    <property type="term" value="F:zinc ion binding"/>
    <property type="evidence" value="ECO:0007669"/>
    <property type="project" value="UniProtKB-KW"/>
</dbReference>
<dbReference type="GO" id="GO:0035282">
    <property type="term" value="P:segmentation"/>
    <property type="evidence" value="ECO:0007669"/>
    <property type="project" value="UniProtKB-KW"/>
</dbReference>
<dbReference type="FunFam" id="3.30.160.60:FF:000123">
    <property type="entry name" value="transcriptional repressor CTCF isoform X1"/>
    <property type="match status" value="1"/>
</dbReference>
<dbReference type="Gene3D" id="3.30.160.60">
    <property type="entry name" value="Classic Zinc Finger"/>
    <property type="match status" value="1"/>
</dbReference>
<dbReference type="InterPro" id="IPR036236">
    <property type="entry name" value="Znf_C2H2_sf"/>
</dbReference>
<dbReference type="InterPro" id="IPR013087">
    <property type="entry name" value="Znf_C2H2_type"/>
</dbReference>
<dbReference type="PANTHER" id="PTHR24392:SF49">
    <property type="entry name" value="PROTEIN HUNCHBACK"/>
    <property type="match status" value="1"/>
</dbReference>
<dbReference type="PANTHER" id="PTHR24392">
    <property type="entry name" value="ZINC FINGER PROTEIN"/>
    <property type="match status" value="1"/>
</dbReference>
<dbReference type="Pfam" id="PF00096">
    <property type="entry name" value="zf-C2H2"/>
    <property type="match status" value="1"/>
</dbReference>
<dbReference type="SMART" id="SM00355">
    <property type="entry name" value="ZnF_C2H2"/>
    <property type="match status" value="1"/>
</dbReference>
<dbReference type="SUPFAM" id="SSF57667">
    <property type="entry name" value="beta-beta-alpha zinc fingers"/>
    <property type="match status" value="1"/>
</dbReference>
<dbReference type="PROSITE" id="PS00028">
    <property type="entry name" value="ZINC_FINGER_C2H2_1"/>
    <property type="match status" value="1"/>
</dbReference>
<dbReference type="PROSITE" id="PS50157">
    <property type="entry name" value="ZINC_FINGER_C2H2_2"/>
    <property type="match status" value="1"/>
</dbReference>
<feature type="chain" id="PRO_0000046981" description="Protein hunchback">
    <location>
        <begin position="1" status="less than"/>
        <end position="50" status="greater than"/>
    </location>
</feature>
<feature type="zinc finger region" description="C2H2-type 1" evidence="1">
    <location>
        <begin position="1" status="less than"/>
        <end position="5"/>
    </location>
</feature>
<feature type="zinc finger region" description="C2H2-type 2" evidence="1">
    <location>
        <begin position="11"/>
        <end position="33"/>
    </location>
</feature>
<feature type="zinc finger region" description="C2H2-type 3" evidence="1">
    <location>
        <begin position="39"/>
        <end position="50" status="greater than"/>
    </location>
</feature>
<feature type="non-terminal residue">
    <location>
        <position position="1"/>
    </location>
</feature>
<feature type="non-terminal residue">
    <location>
        <position position="50"/>
    </location>
</feature>